<feature type="signal peptide" evidence="2">
    <location>
        <begin position="1"/>
        <end position="19"/>
    </location>
</feature>
<feature type="chain" id="PRO_0000456233" description="Complement inhibitor CirpT2">
    <location>
        <begin position="20"/>
        <end position="108"/>
    </location>
</feature>
<feature type="disulfide bond" evidence="1">
    <location>
        <begin position="40"/>
        <end position="64"/>
    </location>
</feature>
<feature type="disulfide bond" evidence="1">
    <location>
        <begin position="59"/>
        <end position="98"/>
    </location>
</feature>
<feature type="disulfide bond" evidence="1">
    <location>
        <begin position="76"/>
        <end position="99"/>
    </location>
</feature>
<feature type="disulfide bond" evidence="1">
    <location>
        <begin position="85"/>
        <end position="104"/>
    </location>
</feature>
<accession>P0DQV1</accession>
<name>C5IT2_DERAN</name>
<comment type="function">
    <text evidence="1 3">Complement inhibitor (PubMed:31871188). Prevents complement-mediated activation of C5 by sterically preventing direct binding of C5 to its convertase (binding with domains MG4 and MG5) (By similarity) (PubMed:31871188). Binds C5 at a different binding site than the other tick complement inhibitors OmCI and RaCI3, and the drug eculizumab (By similarity). Inhibits the complement in human, rat and guinea pig, and also shows a reduced inhibition in rabbit and pig (By similarity).</text>
</comment>
<comment type="subcellular location">
    <subcellularLocation>
        <location evidence="6">Secreted</location>
    </subcellularLocation>
</comment>
<comment type="tissue specificity">
    <text evidence="6">Expressed in salivary glands.</text>
</comment>
<comment type="similarity">
    <text evidence="5">Belongs to the CirpT family.</text>
</comment>
<proteinExistence type="inferred from homology"/>
<reference key="1">
    <citation type="journal article" date="2007" name="Insect Biochem. Mol. Biol.">
        <title>Transcriptome analysis of the salivary glands of Dermacentor andersoni Stiles (Acari: Ixodidae).</title>
        <authorList>
            <person name="Alarcon-Chaidez F.J."/>
            <person name="Sun J."/>
            <person name="Wikel S.K."/>
        </authorList>
    </citation>
    <scope>NUCLEOTIDE SEQUENCE [MRNA]</scope>
    <source>
        <tissue>Salivary gland</tissue>
    </source>
</reference>
<reference key="2">
    <citation type="journal article" date="2020" name="Proc. Natl. Acad. Sci. U.S.A.">
        <title>An inhibitor of complement C5 provides structural insights into activation.</title>
        <authorList>
            <person name="Reichhardt M.P."/>
            <person name="Johnson S."/>
            <person name="Tang T."/>
            <person name="Morgan T."/>
            <person name="Tebeka N."/>
            <person name="Popitsch N."/>
            <person name="Deme J.C."/>
            <person name="Jore M.M."/>
            <person name="Lea S.M."/>
        </authorList>
    </citation>
    <scope>FUNCTION</scope>
    <scope>RECOMBINANT EXPRESSION</scope>
    <source>
        <tissue>Salivary gland</tissue>
    </source>
</reference>
<evidence type="ECO:0000250" key="1">
    <source>
        <dbReference type="UniProtKB" id="L7MB58"/>
    </source>
</evidence>
<evidence type="ECO:0000255" key="2"/>
<evidence type="ECO:0000269" key="3">
    <source>
    </source>
</evidence>
<evidence type="ECO:0000303" key="4">
    <source>
    </source>
</evidence>
<evidence type="ECO:0000305" key="5"/>
<evidence type="ECO:0000305" key="6">
    <source>
    </source>
</evidence>
<keyword id="KW-1015">Disulfide bond</keyword>
<keyword id="KW-0964">Secreted</keyword>
<keyword id="KW-0732">Signal</keyword>
<organism>
    <name type="scientific">Dermacentor andersoni</name>
    <name type="common">Rocky mountain wood tick</name>
    <dbReference type="NCBI Taxonomy" id="34620"/>
    <lineage>
        <taxon>Eukaryota</taxon>
        <taxon>Metazoa</taxon>
        <taxon>Ecdysozoa</taxon>
        <taxon>Arthropoda</taxon>
        <taxon>Chelicerata</taxon>
        <taxon>Arachnida</taxon>
        <taxon>Acari</taxon>
        <taxon>Parasitiformes</taxon>
        <taxon>Ixodida</taxon>
        <taxon>Ixodoidea</taxon>
        <taxon>Ixodidae</taxon>
        <taxon>Rhipicephalinae</taxon>
        <taxon>Dermacentor</taxon>
    </lineage>
</organism>
<protein>
    <recommendedName>
        <fullName evidence="4">Complement inhibitor CirpT2</fullName>
    </recommendedName>
</protein>
<sequence>MRTLVASLCVFAVFSAVCCDVQERGHTYRTRNVTVEDGACVFERNVIPDGETKALNSPCVLSTCYAAAREVNSTLCPNIGVEQGCRVEWTPVGEYPNCCPKHVCPTTS</sequence>
<dbReference type="EMBL" id="EG363688">
    <property type="status" value="NOT_ANNOTATED_CDS"/>
    <property type="molecule type" value="mRNA"/>
</dbReference>
<dbReference type="RefSeq" id="XP_050029693.1">
    <property type="nucleotide sequence ID" value="XM_050173736.2"/>
</dbReference>
<dbReference type="SMR" id="P0DQV1"/>
<dbReference type="EnsemblMetazoa" id="XM_050173736.1">
    <property type="protein sequence ID" value="XP_050029693.1"/>
    <property type="gene ID" value="LOC126525801"/>
</dbReference>
<dbReference type="GeneID" id="126525801"/>
<dbReference type="VEuPathDB" id="VectorBase:DAND_013127"/>
<dbReference type="OMA" id="CHVEWTP"/>
<dbReference type="OrthoDB" id="6697593at2759"/>
<dbReference type="GO" id="GO:0005576">
    <property type="term" value="C:extracellular region"/>
    <property type="evidence" value="ECO:0007669"/>
    <property type="project" value="UniProtKB-SubCell"/>
</dbReference>
<dbReference type="InterPro" id="IPR029277">
    <property type="entry name" value="SVWC_dom"/>
</dbReference>
<dbReference type="Pfam" id="PF15430">
    <property type="entry name" value="SVWC"/>
    <property type="match status" value="1"/>
</dbReference>
<dbReference type="SMART" id="SM01318">
    <property type="entry name" value="SVWC"/>
    <property type="match status" value="1"/>
</dbReference>